<gene>
    <name evidence="1" type="primary">rplQ</name>
    <name type="ordered locus">CFF8240_0060</name>
</gene>
<keyword id="KW-0687">Ribonucleoprotein</keyword>
<keyword id="KW-0689">Ribosomal protein</keyword>
<dbReference type="EMBL" id="CP000487">
    <property type="protein sequence ID" value="ABK81928.1"/>
    <property type="molecule type" value="Genomic_DNA"/>
</dbReference>
<dbReference type="RefSeq" id="WP_002848037.1">
    <property type="nucleotide sequence ID" value="NC_008599.1"/>
</dbReference>
<dbReference type="SMR" id="A0RM37"/>
<dbReference type="GeneID" id="61063904"/>
<dbReference type="KEGG" id="cff:CFF8240_0060"/>
<dbReference type="eggNOG" id="COG0203">
    <property type="taxonomic scope" value="Bacteria"/>
</dbReference>
<dbReference type="HOGENOM" id="CLU_074407_2_0_7"/>
<dbReference type="Proteomes" id="UP000000760">
    <property type="component" value="Chromosome"/>
</dbReference>
<dbReference type="GO" id="GO:0022625">
    <property type="term" value="C:cytosolic large ribosomal subunit"/>
    <property type="evidence" value="ECO:0007669"/>
    <property type="project" value="TreeGrafter"/>
</dbReference>
<dbReference type="GO" id="GO:0003735">
    <property type="term" value="F:structural constituent of ribosome"/>
    <property type="evidence" value="ECO:0007669"/>
    <property type="project" value="InterPro"/>
</dbReference>
<dbReference type="GO" id="GO:0006412">
    <property type="term" value="P:translation"/>
    <property type="evidence" value="ECO:0007669"/>
    <property type="project" value="UniProtKB-UniRule"/>
</dbReference>
<dbReference type="FunFam" id="3.90.1030.10:FF:000003">
    <property type="entry name" value="50S ribosomal protein L17"/>
    <property type="match status" value="1"/>
</dbReference>
<dbReference type="Gene3D" id="3.90.1030.10">
    <property type="entry name" value="Ribosomal protein L17"/>
    <property type="match status" value="1"/>
</dbReference>
<dbReference type="HAMAP" id="MF_01368">
    <property type="entry name" value="Ribosomal_bL17"/>
    <property type="match status" value="1"/>
</dbReference>
<dbReference type="InterPro" id="IPR000456">
    <property type="entry name" value="Ribosomal_bL17"/>
</dbReference>
<dbReference type="InterPro" id="IPR047859">
    <property type="entry name" value="Ribosomal_bL17_CS"/>
</dbReference>
<dbReference type="InterPro" id="IPR036373">
    <property type="entry name" value="Ribosomal_bL17_sf"/>
</dbReference>
<dbReference type="NCBIfam" id="TIGR00059">
    <property type="entry name" value="L17"/>
    <property type="match status" value="1"/>
</dbReference>
<dbReference type="PANTHER" id="PTHR14413:SF16">
    <property type="entry name" value="LARGE RIBOSOMAL SUBUNIT PROTEIN BL17M"/>
    <property type="match status" value="1"/>
</dbReference>
<dbReference type="PANTHER" id="PTHR14413">
    <property type="entry name" value="RIBOSOMAL PROTEIN L17"/>
    <property type="match status" value="1"/>
</dbReference>
<dbReference type="Pfam" id="PF01196">
    <property type="entry name" value="Ribosomal_L17"/>
    <property type="match status" value="1"/>
</dbReference>
<dbReference type="SUPFAM" id="SSF64263">
    <property type="entry name" value="Prokaryotic ribosomal protein L17"/>
    <property type="match status" value="1"/>
</dbReference>
<dbReference type="PROSITE" id="PS01167">
    <property type="entry name" value="RIBOSOMAL_L17"/>
    <property type="match status" value="1"/>
</dbReference>
<reference key="1">
    <citation type="submission" date="2006-11" db="EMBL/GenBank/DDBJ databases">
        <title>Sequence of Campylobacter fetus subsp. fetus 82-40.</title>
        <authorList>
            <person name="Fouts D.E."/>
            <person name="Nelson K.E."/>
        </authorList>
    </citation>
    <scope>NUCLEOTIDE SEQUENCE [LARGE SCALE GENOMIC DNA]</scope>
    <source>
        <strain>82-40</strain>
    </source>
</reference>
<name>RL17_CAMFF</name>
<evidence type="ECO:0000255" key="1">
    <source>
        <dbReference type="HAMAP-Rule" id="MF_01368"/>
    </source>
</evidence>
<evidence type="ECO:0000305" key="2"/>
<accession>A0RM37</accession>
<protein>
    <recommendedName>
        <fullName evidence="1">Large ribosomal subunit protein bL17</fullName>
    </recommendedName>
    <alternativeName>
        <fullName evidence="2">50S ribosomal protein L17</fullName>
    </alternativeName>
</protein>
<comment type="subunit">
    <text evidence="1">Part of the 50S ribosomal subunit. Contacts protein L32.</text>
</comment>
<comment type="similarity">
    <text evidence="1">Belongs to the bacterial ribosomal protein bL17 family.</text>
</comment>
<sequence length="118" mass="13349">MRHNHGYRKLGRTSSHRAALLKNLTIAIVKAGKIETTLPKAKELRGYVEKLITRARKGDFNAHKFVFAHLQDKEATNMLVTEIAPKYATRNGGYTRIIKTRVRKGDAAEMAYIELVAQ</sequence>
<feature type="chain" id="PRO_1000055789" description="Large ribosomal subunit protein bL17">
    <location>
        <begin position="1"/>
        <end position="118"/>
    </location>
</feature>
<proteinExistence type="inferred from homology"/>
<organism>
    <name type="scientific">Campylobacter fetus subsp. fetus (strain 82-40)</name>
    <dbReference type="NCBI Taxonomy" id="360106"/>
    <lineage>
        <taxon>Bacteria</taxon>
        <taxon>Pseudomonadati</taxon>
        <taxon>Campylobacterota</taxon>
        <taxon>Epsilonproteobacteria</taxon>
        <taxon>Campylobacterales</taxon>
        <taxon>Campylobacteraceae</taxon>
        <taxon>Campylobacter</taxon>
    </lineage>
</organism>